<organism>
    <name type="scientific">Methanococcus vannielii (strain ATCC 35089 / DSM 1224 / JCM 13029 / OCM 148 / SB)</name>
    <dbReference type="NCBI Taxonomy" id="406327"/>
    <lineage>
        <taxon>Archaea</taxon>
        <taxon>Methanobacteriati</taxon>
        <taxon>Methanobacteriota</taxon>
        <taxon>Methanomada group</taxon>
        <taxon>Methanococci</taxon>
        <taxon>Methanococcales</taxon>
        <taxon>Methanococcaceae</taxon>
        <taxon>Methanococcus</taxon>
    </lineage>
</organism>
<gene>
    <name evidence="1" type="primary">surE</name>
    <name type="ordered locus">Mevan_0374</name>
</gene>
<sequence>MTLEILLVNDDGIYSNGLLALKNVLSSEFDANVTVVAPTNQQSGIGRAISFFEPLRITKTKLSDCSEGYAVSGTPSDCVVLGIYQVLKKVPDFVISGINIGENLGTEITTSGTLGAAFEGSHHGAKAFACSLQVTADHLKFKEGESPIEFLNAANVFKKVFEKFLDSEFPCDVLNVNIPEDATLNTPVEITKLAKKMYTTHVEERIDPRSRSYYWIDGYPIMEEEDGTDVYAIRRKKHVSLTPLTLDTTIKNIELFQEIYKKKF</sequence>
<name>SURE_METVS</name>
<comment type="function">
    <text evidence="1">Nucleotidase that shows phosphatase activity on nucleoside 5'-monophosphates.</text>
</comment>
<comment type="catalytic activity">
    <reaction evidence="1">
        <text>a ribonucleoside 5'-phosphate + H2O = a ribonucleoside + phosphate</text>
        <dbReference type="Rhea" id="RHEA:12484"/>
        <dbReference type="ChEBI" id="CHEBI:15377"/>
        <dbReference type="ChEBI" id="CHEBI:18254"/>
        <dbReference type="ChEBI" id="CHEBI:43474"/>
        <dbReference type="ChEBI" id="CHEBI:58043"/>
        <dbReference type="EC" id="3.1.3.5"/>
    </reaction>
</comment>
<comment type="cofactor">
    <cofactor evidence="1">
        <name>a divalent metal cation</name>
        <dbReference type="ChEBI" id="CHEBI:60240"/>
    </cofactor>
    <text evidence="1">Binds 1 divalent metal cation per subunit.</text>
</comment>
<comment type="subcellular location">
    <subcellularLocation>
        <location evidence="1">Cytoplasm</location>
    </subcellularLocation>
</comment>
<comment type="similarity">
    <text evidence="1">Belongs to the SurE nucleotidase family.</text>
</comment>
<dbReference type="EC" id="3.1.3.5" evidence="1"/>
<dbReference type="EMBL" id="CP000742">
    <property type="protein sequence ID" value="ABR54283.1"/>
    <property type="molecule type" value="Genomic_DNA"/>
</dbReference>
<dbReference type="RefSeq" id="WP_011972186.1">
    <property type="nucleotide sequence ID" value="NC_009634.1"/>
</dbReference>
<dbReference type="SMR" id="A6UP61"/>
<dbReference type="STRING" id="406327.Mevan_0374"/>
<dbReference type="GeneID" id="5325750"/>
<dbReference type="KEGG" id="mvn:Mevan_0374"/>
<dbReference type="eggNOG" id="arCOG02303">
    <property type="taxonomic scope" value="Archaea"/>
</dbReference>
<dbReference type="HOGENOM" id="CLU_045192_1_3_2"/>
<dbReference type="OrthoDB" id="26873at2157"/>
<dbReference type="Proteomes" id="UP000001107">
    <property type="component" value="Chromosome"/>
</dbReference>
<dbReference type="GO" id="GO:0005737">
    <property type="term" value="C:cytoplasm"/>
    <property type="evidence" value="ECO:0007669"/>
    <property type="project" value="UniProtKB-SubCell"/>
</dbReference>
<dbReference type="GO" id="GO:0008253">
    <property type="term" value="F:5'-nucleotidase activity"/>
    <property type="evidence" value="ECO:0007669"/>
    <property type="project" value="UniProtKB-UniRule"/>
</dbReference>
<dbReference type="GO" id="GO:0046872">
    <property type="term" value="F:metal ion binding"/>
    <property type="evidence" value="ECO:0007669"/>
    <property type="project" value="UniProtKB-UniRule"/>
</dbReference>
<dbReference type="GO" id="GO:0000166">
    <property type="term" value="F:nucleotide binding"/>
    <property type="evidence" value="ECO:0007669"/>
    <property type="project" value="UniProtKB-KW"/>
</dbReference>
<dbReference type="Gene3D" id="3.40.1210.10">
    <property type="entry name" value="Survival protein SurE-like phosphatase/nucleotidase"/>
    <property type="match status" value="1"/>
</dbReference>
<dbReference type="HAMAP" id="MF_00060">
    <property type="entry name" value="SurE"/>
    <property type="match status" value="1"/>
</dbReference>
<dbReference type="InterPro" id="IPR030048">
    <property type="entry name" value="SurE"/>
</dbReference>
<dbReference type="InterPro" id="IPR002828">
    <property type="entry name" value="SurE-like_Pase/nucleotidase"/>
</dbReference>
<dbReference type="InterPro" id="IPR036523">
    <property type="entry name" value="SurE-like_sf"/>
</dbReference>
<dbReference type="NCBIfam" id="NF001491">
    <property type="entry name" value="PRK00346.2-1"/>
    <property type="match status" value="1"/>
</dbReference>
<dbReference type="NCBIfam" id="TIGR00087">
    <property type="entry name" value="surE"/>
    <property type="match status" value="1"/>
</dbReference>
<dbReference type="PANTHER" id="PTHR30457">
    <property type="entry name" value="5'-NUCLEOTIDASE SURE"/>
    <property type="match status" value="1"/>
</dbReference>
<dbReference type="PANTHER" id="PTHR30457:SF0">
    <property type="entry name" value="PHOSPHATASE, PUTATIVE (AFU_ORTHOLOGUE AFUA_4G01070)-RELATED"/>
    <property type="match status" value="1"/>
</dbReference>
<dbReference type="Pfam" id="PF01975">
    <property type="entry name" value="SurE"/>
    <property type="match status" value="1"/>
</dbReference>
<dbReference type="SUPFAM" id="SSF64167">
    <property type="entry name" value="SurE-like"/>
    <property type="match status" value="1"/>
</dbReference>
<evidence type="ECO:0000255" key="1">
    <source>
        <dbReference type="HAMAP-Rule" id="MF_00060"/>
    </source>
</evidence>
<keyword id="KW-0963">Cytoplasm</keyword>
<keyword id="KW-0378">Hydrolase</keyword>
<keyword id="KW-0479">Metal-binding</keyword>
<keyword id="KW-0547">Nucleotide-binding</keyword>
<protein>
    <recommendedName>
        <fullName evidence="1">5'-nucleotidase SurE</fullName>
        <ecNumber evidence="1">3.1.3.5</ecNumber>
    </recommendedName>
    <alternativeName>
        <fullName evidence="1">Nucleoside 5'-monophosphate phosphohydrolase</fullName>
    </alternativeName>
</protein>
<proteinExistence type="inferred from homology"/>
<reference key="1">
    <citation type="submission" date="2007-06" db="EMBL/GenBank/DDBJ databases">
        <title>Complete sequence of Methanococcus vannielii SB.</title>
        <authorList>
            <consortium name="US DOE Joint Genome Institute"/>
            <person name="Copeland A."/>
            <person name="Lucas S."/>
            <person name="Lapidus A."/>
            <person name="Barry K."/>
            <person name="Glavina del Rio T."/>
            <person name="Dalin E."/>
            <person name="Tice H."/>
            <person name="Pitluck S."/>
            <person name="Chain P."/>
            <person name="Malfatti S."/>
            <person name="Shin M."/>
            <person name="Vergez L."/>
            <person name="Schmutz J."/>
            <person name="Larimer F."/>
            <person name="Land M."/>
            <person name="Hauser L."/>
            <person name="Kyrpides N."/>
            <person name="Anderson I."/>
            <person name="Sieprawska-Lupa M."/>
            <person name="Whitman W.B."/>
            <person name="Richardson P."/>
        </authorList>
    </citation>
    <scope>NUCLEOTIDE SEQUENCE [LARGE SCALE GENOMIC DNA]</scope>
    <source>
        <strain>ATCC 35089 / DSM 1224 / JCM 13029 / OCM 148 / SB</strain>
    </source>
</reference>
<feature type="chain" id="PRO_0000335295" description="5'-nucleotidase SurE">
    <location>
        <begin position="1"/>
        <end position="264"/>
    </location>
</feature>
<feature type="binding site" evidence="1">
    <location>
        <position position="10"/>
    </location>
    <ligand>
        <name>a divalent metal cation</name>
        <dbReference type="ChEBI" id="CHEBI:60240"/>
    </ligand>
</feature>
<feature type="binding site" evidence="1">
    <location>
        <position position="11"/>
    </location>
    <ligand>
        <name>a divalent metal cation</name>
        <dbReference type="ChEBI" id="CHEBI:60240"/>
    </ligand>
</feature>
<feature type="binding site" evidence="1">
    <location>
        <position position="43"/>
    </location>
    <ligand>
        <name>a divalent metal cation</name>
        <dbReference type="ChEBI" id="CHEBI:60240"/>
    </ligand>
</feature>
<feature type="binding site" evidence="1">
    <location>
        <position position="99"/>
    </location>
    <ligand>
        <name>a divalent metal cation</name>
        <dbReference type="ChEBI" id="CHEBI:60240"/>
    </ligand>
</feature>
<accession>A6UP61</accession>